<protein>
    <recommendedName>
        <fullName evidence="1">tRNA dimethylallyltransferase</fullName>
        <ecNumber evidence="1">2.5.1.75</ecNumber>
    </recommendedName>
    <alternativeName>
        <fullName evidence="1">Dimethylallyl diphosphate:tRNA dimethylallyltransferase</fullName>
        <shortName evidence="1">DMAPP:tRNA dimethylallyltransferase</shortName>
        <shortName evidence="1">DMATase</shortName>
    </alternativeName>
    <alternativeName>
        <fullName evidence="1">Isopentenyl-diphosphate:tRNA isopentenyltransferase</fullName>
        <shortName evidence="1">IPP transferase</shortName>
        <shortName evidence="1">IPPT</shortName>
        <shortName evidence="1">IPTase</shortName>
    </alternativeName>
</protein>
<proteinExistence type="inferred from homology"/>
<name>MIAA_LIMF3</name>
<gene>
    <name evidence="1" type="primary">miaA</name>
    <name type="ordered locus">LAF_1276</name>
</gene>
<feature type="chain" id="PRO_1000098668" description="tRNA dimethylallyltransferase">
    <location>
        <begin position="1"/>
        <end position="307"/>
    </location>
</feature>
<feature type="region of interest" description="Interaction with substrate tRNA" evidence="1">
    <location>
        <begin position="34"/>
        <end position="37"/>
    </location>
</feature>
<feature type="binding site" evidence="1">
    <location>
        <begin position="9"/>
        <end position="16"/>
    </location>
    <ligand>
        <name>ATP</name>
        <dbReference type="ChEBI" id="CHEBI:30616"/>
    </ligand>
</feature>
<feature type="binding site" evidence="1">
    <location>
        <begin position="11"/>
        <end position="16"/>
    </location>
    <ligand>
        <name>substrate</name>
    </ligand>
</feature>
<feature type="site" description="Interaction with substrate tRNA" evidence="1">
    <location>
        <position position="100"/>
    </location>
</feature>
<feature type="site" description="Interaction with substrate tRNA" evidence="1">
    <location>
        <position position="126"/>
    </location>
</feature>
<sequence>MAKVVAIVGPTAVGKTALSLRVAQKFGGEVISGDSMQVYRGLDIGTAKATTEERSLVPHHLIDVKDIHDRFSVADFKVAAEREIDQITDRGHLPLVVGGTGFYLQALVENLALGRDQFDQESAAIRDHWHQIATERGKQFVWEQLNERDPAAAAKIPVANLRRVIRALEVIEKTGALFSTQPQPPAKNDFLIIGLTTQRPVLYQRINQRVDQMVANGLLEEAKWLYDQGGENEQAGKGIGYRELFPHFAGTVSRQEALEKIKLDSRHYAKRQLTWFRNQMTVHWFDLVSQQNTTEEIEALINGWLKK</sequence>
<comment type="function">
    <text evidence="1">Catalyzes the transfer of a dimethylallyl group onto the adenine at position 37 in tRNAs that read codons beginning with uridine, leading to the formation of N6-(dimethylallyl)adenosine (i(6)A).</text>
</comment>
<comment type="catalytic activity">
    <reaction evidence="1">
        <text>adenosine(37) in tRNA + dimethylallyl diphosphate = N(6)-dimethylallyladenosine(37) in tRNA + diphosphate</text>
        <dbReference type="Rhea" id="RHEA:26482"/>
        <dbReference type="Rhea" id="RHEA-COMP:10162"/>
        <dbReference type="Rhea" id="RHEA-COMP:10375"/>
        <dbReference type="ChEBI" id="CHEBI:33019"/>
        <dbReference type="ChEBI" id="CHEBI:57623"/>
        <dbReference type="ChEBI" id="CHEBI:74411"/>
        <dbReference type="ChEBI" id="CHEBI:74415"/>
        <dbReference type="EC" id="2.5.1.75"/>
    </reaction>
</comment>
<comment type="cofactor">
    <cofactor evidence="1">
        <name>Mg(2+)</name>
        <dbReference type="ChEBI" id="CHEBI:18420"/>
    </cofactor>
</comment>
<comment type="subunit">
    <text evidence="1">Monomer.</text>
</comment>
<comment type="similarity">
    <text evidence="1">Belongs to the IPP transferase family.</text>
</comment>
<reference key="1">
    <citation type="journal article" date="2008" name="DNA Res.">
        <title>Comparative genome analysis of Lactobacillus reuteri and Lactobacillus fermentum reveal a genomic island for reuterin and cobalamin production.</title>
        <authorList>
            <person name="Morita H."/>
            <person name="Toh H."/>
            <person name="Fukuda S."/>
            <person name="Horikawa H."/>
            <person name="Oshima K."/>
            <person name="Suzuki T."/>
            <person name="Murakami M."/>
            <person name="Hisamatsu S."/>
            <person name="Kato Y."/>
            <person name="Takizawa T."/>
            <person name="Fukuoka H."/>
            <person name="Yoshimura T."/>
            <person name="Itoh K."/>
            <person name="O'Sullivan D.J."/>
            <person name="McKay L.L."/>
            <person name="Ohno H."/>
            <person name="Kikuchi J."/>
            <person name="Masaoka T."/>
            <person name="Hattori M."/>
        </authorList>
    </citation>
    <scope>NUCLEOTIDE SEQUENCE [LARGE SCALE GENOMIC DNA]</scope>
    <source>
        <strain>NBRC 3956 / LMG 18251</strain>
    </source>
</reference>
<accession>B2GD80</accession>
<evidence type="ECO:0000255" key="1">
    <source>
        <dbReference type="HAMAP-Rule" id="MF_00185"/>
    </source>
</evidence>
<dbReference type="EC" id="2.5.1.75" evidence="1"/>
<dbReference type="EMBL" id="AP008937">
    <property type="protein sequence ID" value="BAG27612.1"/>
    <property type="molecule type" value="Genomic_DNA"/>
</dbReference>
<dbReference type="RefSeq" id="WP_012391462.1">
    <property type="nucleotide sequence ID" value="NC_010610.1"/>
</dbReference>
<dbReference type="SMR" id="B2GD80"/>
<dbReference type="KEGG" id="lfe:LAF_1276"/>
<dbReference type="PATRIC" id="fig|334390.5.peg.1399"/>
<dbReference type="eggNOG" id="COG0324">
    <property type="taxonomic scope" value="Bacteria"/>
</dbReference>
<dbReference type="HOGENOM" id="CLU_032616_0_1_9"/>
<dbReference type="Proteomes" id="UP000001697">
    <property type="component" value="Chromosome"/>
</dbReference>
<dbReference type="GO" id="GO:0005524">
    <property type="term" value="F:ATP binding"/>
    <property type="evidence" value="ECO:0007669"/>
    <property type="project" value="UniProtKB-UniRule"/>
</dbReference>
<dbReference type="GO" id="GO:0052381">
    <property type="term" value="F:tRNA dimethylallyltransferase activity"/>
    <property type="evidence" value="ECO:0007669"/>
    <property type="project" value="UniProtKB-UniRule"/>
</dbReference>
<dbReference type="GO" id="GO:0006400">
    <property type="term" value="P:tRNA modification"/>
    <property type="evidence" value="ECO:0007669"/>
    <property type="project" value="TreeGrafter"/>
</dbReference>
<dbReference type="Gene3D" id="1.10.20.140">
    <property type="match status" value="1"/>
</dbReference>
<dbReference type="Gene3D" id="3.40.50.300">
    <property type="entry name" value="P-loop containing nucleotide triphosphate hydrolases"/>
    <property type="match status" value="1"/>
</dbReference>
<dbReference type="HAMAP" id="MF_00185">
    <property type="entry name" value="IPP_trans"/>
    <property type="match status" value="1"/>
</dbReference>
<dbReference type="InterPro" id="IPR039657">
    <property type="entry name" value="Dimethylallyltransferase"/>
</dbReference>
<dbReference type="InterPro" id="IPR018022">
    <property type="entry name" value="IPT"/>
</dbReference>
<dbReference type="InterPro" id="IPR027417">
    <property type="entry name" value="P-loop_NTPase"/>
</dbReference>
<dbReference type="NCBIfam" id="TIGR00174">
    <property type="entry name" value="miaA"/>
    <property type="match status" value="1"/>
</dbReference>
<dbReference type="PANTHER" id="PTHR11088">
    <property type="entry name" value="TRNA DIMETHYLALLYLTRANSFERASE"/>
    <property type="match status" value="1"/>
</dbReference>
<dbReference type="PANTHER" id="PTHR11088:SF60">
    <property type="entry name" value="TRNA DIMETHYLALLYLTRANSFERASE"/>
    <property type="match status" value="1"/>
</dbReference>
<dbReference type="Pfam" id="PF01715">
    <property type="entry name" value="IPPT"/>
    <property type="match status" value="1"/>
</dbReference>
<dbReference type="SUPFAM" id="SSF52540">
    <property type="entry name" value="P-loop containing nucleoside triphosphate hydrolases"/>
    <property type="match status" value="2"/>
</dbReference>
<organism>
    <name type="scientific">Limosilactobacillus fermentum (strain NBRC 3956 / LMG 18251)</name>
    <name type="common">Lactobacillus fermentum</name>
    <dbReference type="NCBI Taxonomy" id="334390"/>
    <lineage>
        <taxon>Bacteria</taxon>
        <taxon>Bacillati</taxon>
        <taxon>Bacillota</taxon>
        <taxon>Bacilli</taxon>
        <taxon>Lactobacillales</taxon>
        <taxon>Lactobacillaceae</taxon>
        <taxon>Limosilactobacillus</taxon>
    </lineage>
</organism>
<keyword id="KW-0067">ATP-binding</keyword>
<keyword id="KW-0460">Magnesium</keyword>
<keyword id="KW-0547">Nucleotide-binding</keyword>
<keyword id="KW-1185">Reference proteome</keyword>
<keyword id="KW-0808">Transferase</keyword>
<keyword id="KW-0819">tRNA processing</keyword>